<name>FDHE_SALNS</name>
<sequence>MSIRIIPQDELGSSEKRTADMIPPLLFPRLKNVYNRRAERLRELAENNPLGDYLRFAALIAHAQEVVLYDHPLEMDLTARIKEANDQGKPPLDIHVLPRDKHWQKLLHSLIAELKPEMSGPALAVIENLEKASEQELEQMASALFASDFASVSSDKAPFIWAALSLYWAQMASLIPGKARAEYGEARQYCPVCGSMPVSSMVQIGTTQGLRYLHCNLCETEWHVVRVKCSNCEQSRDLHYWSLENEQAAVKAESCGDCGTYLKILYQEKDPKVEAVADDLASLVLDARMEQEGFARSSINPFLFPGEGE</sequence>
<evidence type="ECO:0000255" key="1">
    <source>
        <dbReference type="HAMAP-Rule" id="MF_00611"/>
    </source>
</evidence>
<organism>
    <name type="scientific">Salmonella newport (strain SL254)</name>
    <dbReference type="NCBI Taxonomy" id="423368"/>
    <lineage>
        <taxon>Bacteria</taxon>
        <taxon>Pseudomonadati</taxon>
        <taxon>Pseudomonadota</taxon>
        <taxon>Gammaproteobacteria</taxon>
        <taxon>Enterobacterales</taxon>
        <taxon>Enterobacteriaceae</taxon>
        <taxon>Salmonella</taxon>
    </lineage>
</organism>
<comment type="function">
    <text evidence="1">Necessary for formate dehydrogenase activity.</text>
</comment>
<comment type="subcellular location">
    <subcellularLocation>
        <location evidence="1">Cytoplasm</location>
    </subcellularLocation>
</comment>
<comment type="similarity">
    <text evidence="1">Belongs to the FdhE family.</text>
</comment>
<gene>
    <name evidence="1" type="primary">fdhE</name>
    <name type="ordered locus">SNSL254_A4314</name>
</gene>
<keyword id="KW-0963">Cytoplasm</keyword>
<proteinExistence type="inferred from homology"/>
<dbReference type="EMBL" id="CP001113">
    <property type="protein sequence ID" value="ACF65373.1"/>
    <property type="molecule type" value="Genomic_DNA"/>
</dbReference>
<dbReference type="RefSeq" id="WP_000027730.1">
    <property type="nucleotide sequence ID" value="NZ_CCMR01000001.1"/>
</dbReference>
<dbReference type="SMR" id="B4SZX8"/>
<dbReference type="KEGG" id="see:SNSL254_A4314"/>
<dbReference type="HOGENOM" id="CLU_055275_0_0_6"/>
<dbReference type="Proteomes" id="UP000008824">
    <property type="component" value="Chromosome"/>
</dbReference>
<dbReference type="GO" id="GO:0005829">
    <property type="term" value="C:cytosol"/>
    <property type="evidence" value="ECO:0007669"/>
    <property type="project" value="TreeGrafter"/>
</dbReference>
<dbReference type="GO" id="GO:0008199">
    <property type="term" value="F:ferric iron binding"/>
    <property type="evidence" value="ECO:0007669"/>
    <property type="project" value="TreeGrafter"/>
</dbReference>
<dbReference type="GO" id="GO:0051604">
    <property type="term" value="P:protein maturation"/>
    <property type="evidence" value="ECO:0007669"/>
    <property type="project" value="TreeGrafter"/>
</dbReference>
<dbReference type="CDD" id="cd16341">
    <property type="entry name" value="FdhE"/>
    <property type="match status" value="1"/>
</dbReference>
<dbReference type="FunFam" id="3.90.1670.10:FF:000001">
    <property type="entry name" value="Protein FdhE"/>
    <property type="match status" value="1"/>
</dbReference>
<dbReference type="Gene3D" id="3.90.1670.10">
    <property type="entry name" value="FdhE-like domain"/>
    <property type="match status" value="1"/>
</dbReference>
<dbReference type="HAMAP" id="MF_00611">
    <property type="entry name" value="FdeH"/>
    <property type="match status" value="1"/>
</dbReference>
<dbReference type="InterPro" id="IPR024064">
    <property type="entry name" value="FdhE-like_sf"/>
</dbReference>
<dbReference type="InterPro" id="IPR056796">
    <property type="entry name" value="FdhE_C"/>
</dbReference>
<dbReference type="InterPro" id="IPR056797">
    <property type="entry name" value="FdhE_central"/>
</dbReference>
<dbReference type="InterPro" id="IPR056774">
    <property type="entry name" value="FdhE_N"/>
</dbReference>
<dbReference type="InterPro" id="IPR006452">
    <property type="entry name" value="Formate_DH_accessory"/>
</dbReference>
<dbReference type="NCBIfam" id="TIGR01562">
    <property type="entry name" value="FdhE"/>
    <property type="match status" value="1"/>
</dbReference>
<dbReference type="NCBIfam" id="NF002925">
    <property type="entry name" value="PRK03564.1"/>
    <property type="match status" value="1"/>
</dbReference>
<dbReference type="PANTHER" id="PTHR37689">
    <property type="entry name" value="PROTEIN FDHE"/>
    <property type="match status" value="1"/>
</dbReference>
<dbReference type="PANTHER" id="PTHR37689:SF1">
    <property type="entry name" value="PROTEIN FDHE"/>
    <property type="match status" value="1"/>
</dbReference>
<dbReference type="Pfam" id="PF24860">
    <property type="entry name" value="FdhE_C"/>
    <property type="match status" value="1"/>
</dbReference>
<dbReference type="Pfam" id="PF24859">
    <property type="entry name" value="FdhE_central"/>
    <property type="match status" value="1"/>
</dbReference>
<dbReference type="Pfam" id="PF04216">
    <property type="entry name" value="FdhE_N"/>
    <property type="match status" value="1"/>
</dbReference>
<dbReference type="PIRSF" id="PIRSF018296">
    <property type="entry name" value="Format_dh_formtn"/>
    <property type="match status" value="1"/>
</dbReference>
<dbReference type="SUPFAM" id="SSF144020">
    <property type="entry name" value="FdhE-like"/>
    <property type="match status" value="1"/>
</dbReference>
<feature type="chain" id="PRO_1000130371" description="Protein FdhE">
    <location>
        <begin position="1"/>
        <end position="309"/>
    </location>
</feature>
<accession>B4SZX8</accession>
<reference key="1">
    <citation type="journal article" date="2011" name="J. Bacteriol.">
        <title>Comparative genomics of 28 Salmonella enterica isolates: evidence for CRISPR-mediated adaptive sublineage evolution.</title>
        <authorList>
            <person name="Fricke W.F."/>
            <person name="Mammel M.K."/>
            <person name="McDermott P.F."/>
            <person name="Tartera C."/>
            <person name="White D.G."/>
            <person name="Leclerc J.E."/>
            <person name="Ravel J."/>
            <person name="Cebula T.A."/>
        </authorList>
    </citation>
    <scope>NUCLEOTIDE SEQUENCE [LARGE SCALE GENOMIC DNA]</scope>
    <source>
        <strain>SL254</strain>
    </source>
</reference>
<protein>
    <recommendedName>
        <fullName evidence="1">Protein FdhE</fullName>
    </recommendedName>
</protein>